<dbReference type="EC" id="3.6.4.13"/>
<dbReference type="EMBL" id="AP004745">
    <property type="protein sequence ID" value="BAD54190.1"/>
    <property type="status" value="ALT_SEQ"/>
    <property type="molecule type" value="Genomic_DNA"/>
</dbReference>
<dbReference type="EMBL" id="AP005470">
    <property type="protein sequence ID" value="BAD46119.1"/>
    <property type="status" value="ALT_SEQ"/>
    <property type="molecule type" value="Genomic_DNA"/>
</dbReference>
<dbReference type="EMBL" id="AP008212">
    <property type="protein sequence ID" value="BAF19678.2"/>
    <property type="status" value="ALT_SEQ"/>
    <property type="molecule type" value="Genomic_DNA"/>
</dbReference>
<dbReference type="EMBL" id="AP014962">
    <property type="status" value="NOT_ANNOTATED_CDS"/>
    <property type="molecule type" value="Genomic_DNA"/>
</dbReference>
<dbReference type="EMBL" id="CM000143">
    <property type="status" value="NOT_ANNOTATED_CDS"/>
    <property type="molecule type" value="Genomic_DNA"/>
</dbReference>
<dbReference type="SMR" id="Q0DBU5"/>
<dbReference type="FunCoup" id="Q0DBU5">
    <property type="interactions" value="153"/>
</dbReference>
<dbReference type="STRING" id="39947.Q0DBU5"/>
<dbReference type="PaxDb" id="39947-Q0DBU5"/>
<dbReference type="KEGG" id="dosa:Os06g0526600"/>
<dbReference type="eggNOG" id="KOG0342">
    <property type="taxonomic scope" value="Eukaryota"/>
</dbReference>
<dbReference type="InParanoid" id="Q0DBU5"/>
<dbReference type="Proteomes" id="UP000000763">
    <property type="component" value="Chromosome 6"/>
</dbReference>
<dbReference type="Proteomes" id="UP000007752">
    <property type="component" value="Chromosome 6"/>
</dbReference>
<dbReference type="Proteomes" id="UP000059680">
    <property type="component" value="Chromosome 6"/>
</dbReference>
<dbReference type="GO" id="GO:0005524">
    <property type="term" value="F:ATP binding"/>
    <property type="evidence" value="ECO:0007669"/>
    <property type="project" value="UniProtKB-KW"/>
</dbReference>
<dbReference type="GO" id="GO:0016887">
    <property type="term" value="F:ATP hydrolysis activity"/>
    <property type="evidence" value="ECO:0007669"/>
    <property type="project" value="RHEA"/>
</dbReference>
<dbReference type="GO" id="GO:0003723">
    <property type="term" value="F:RNA binding"/>
    <property type="evidence" value="ECO:0007669"/>
    <property type="project" value="UniProtKB-KW"/>
</dbReference>
<dbReference type="GO" id="GO:0003724">
    <property type="term" value="F:RNA helicase activity"/>
    <property type="evidence" value="ECO:0007669"/>
    <property type="project" value="UniProtKB-EC"/>
</dbReference>
<dbReference type="CDD" id="cd17964">
    <property type="entry name" value="DEADc_MSS116"/>
    <property type="match status" value="1"/>
</dbReference>
<dbReference type="CDD" id="cd18787">
    <property type="entry name" value="SF2_C_DEAD"/>
    <property type="match status" value="1"/>
</dbReference>
<dbReference type="Gene3D" id="3.40.50.300">
    <property type="entry name" value="P-loop containing nucleotide triphosphate hydrolases"/>
    <property type="match status" value="2"/>
</dbReference>
<dbReference type="InterPro" id="IPR011545">
    <property type="entry name" value="DEAD/DEAH_box_helicase_dom"/>
</dbReference>
<dbReference type="InterPro" id="IPR014001">
    <property type="entry name" value="Helicase_ATP-bd"/>
</dbReference>
<dbReference type="InterPro" id="IPR001650">
    <property type="entry name" value="Helicase_C-like"/>
</dbReference>
<dbReference type="InterPro" id="IPR027417">
    <property type="entry name" value="P-loop_NTPase"/>
</dbReference>
<dbReference type="InterPro" id="IPR000629">
    <property type="entry name" value="RNA-helicase_DEAD-box_CS"/>
</dbReference>
<dbReference type="InterPro" id="IPR014014">
    <property type="entry name" value="RNA_helicase_DEAD_Q_motif"/>
</dbReference>
<dbReference type="PANTHER" id="PTHR24031">
    <property type="entry name" value="RNA HELICASE"/>
    <property type="match status" value="1"/>
</dbReference>
<dbReference type="Pfam" id="PF00270">
    <property type="entry name" value="DEAD"/>
    <property type="match status" value="1"/>
</dbReference>
<dbReference type="Pfam" id="PF00271">
    <property type="entry name" value="Helicase_C"/>
    <property type="match status" value="1"/>
</dbReference>
<dbReference type="SMART" id="SM00487">
    <property type="entry name" value="DEXDc"/>
    <property type="match status" value="1"/>
</dbReference>
<dbReference type="SMART" id="SM00490">
    <property type="entry name" value="HELICc"/>
    <property type="match status" value="1"/>
</dbReference>
<dbReference type="SUPFAM" id="SSF52540">
    <property type="entry name" value="P-loop containing nucleoside triphosphate hydrolases"/>
    <property type="match status" value="1"/>
</dbReference>
<dbReference type="PROSITE" id="PS00039">
    <property type="entry name" value="DEAD_ATP_HELICASE"/>
    <property type="match status" value="1"/>
</dbReference>
<dbReference type="PROSITE" id="PS51192">
    <property type="entry name" value="HELICASE_ATP_BIND_1"/>
    <property type="match status" value="1"/>
</dbReference>
<dbReference type="PROSITE" id="PS51194">
    <property type="entry name" value="HELICASE_CTER"/>
    <property type="match status" value="1"/>
</dbReference>
<dbReference type="PROSITE" id="PS51195">
    <property type="entry name" value="Q_MOTIF"/>
    <property type="match status" value="1"/>
</dbReference>
<accession>Q0DBU5</accession>
<accession>Q652Z8</accession>
<feature type="chain" id="PRO_0000282514" description="DEAD-box ATP-dependent RNA helicase 31">
    <location>
        <begin position="1"/>
        <end position="547"/>
    </location>
</feature>
<feature type="domain" description="Helicase ATP-binding" evidence="1">
    <location>
        <begin position="110"/>
        <end position="293"/>
    </location>
</feature>
<feature type="domain" description="Helicase C-terminal" evidence="2">
    <location>
        <begin position="327"/>
        <end position="478"/>
    </location>
</feature>
<feature type="region of interest" description="Disordered" evidence="3">
    <location>
        <begin position="1"/>
        <end position="74"/>
    </location>
</feature>
<feature type="short sequence motif" description="Q motif">
    <location>
        <begin position="79"/>
        <end position="107"/>
    </location>
</feature>
<feature type="short sequence motif" description="DEAD box">
    <location>
        <begin position="241"/>
        <end position="244"/>
    </location>
</feature>
<feature type="compositionally biased region" description="Acidic residues" evidence="3">
    <location>
        <begin position="1"/>
        <end position="34"/>
    </location>
</feature>
<feature type="compositionally biased region" description="Basic and acidic residues" evidence="3">
    <location>
        <begin position="53"/>
        <end position="70"/>
    </location>
</feature>
<feature type="binding site" evidence="1">
    <location>
        <begin position="123"/>
        <end position="130"/>
    </location>
    <ligand>
        <name>ATP</name>
        <dbReference type="ChEBI" id="CHEBI:30616"/>
    </ligand>
</feature>
<keyword id="KW-0067">ATP-binding</keyword>
<keyword id="KW-0347">Helicase</keyword>
<keyword id="KW-0378">Hydrolase</keyword>
<keyword id="KW-0547">Nucleotide-binding</keyword>
<keyword id="KW-1185">Reference proteome</keyword>
<keyword id="KW-0694">RNA-binding</keyword>
<sequence length="547" mass="60647">MFDFGLSEDDSELGEVDEDDGPSGFEDDLFDDEGGEKNLVESPAKNSAPFESIKGEPIDQEGVVHTRESGGGDSYLSQTRFDECSLSPLTLKGVKAAGYERMTAVQEATLPIILKGKDVLAKAKTGTGKTVAFLLPAIEVVSKLPPIDCDKKRPPISVVVVCPTRELADQAAAEANKLLKFHPSIGVQLVIGGTRMALEQKRMHTNPCQILVATPGRLKDHMENTPGFATRLMGVKVLILDEADRLLDMGFRTDIERIVAALPKQRQTLLFSATVPDEVRQVCHIAMKRDLEFVNTVEEGSEETHSQVKQMHVVAPLDKQFSILYGLLTDHISENVDYKVIVFCTTAKVTSLVAELLSELKLNVREIHSRKPQSYRTRISKEFKESKGLILVSSDVSARGVDYPNVTLVVQMGVPTDREQYIHRLGRTGRRGNEGSGILLLAPWEEYFLRSIKDLPITEATLPLIDLDTKRKVEKALAHVEVKDKELAYQAWLGYYNSNKFIGRDKYQLVSLANEFSRSLGLNNPPAVPKLVLRKMGLNNIPGLRSK</sequence>
<proteinExistence type="inferred from homology"/>
<evidence type="ECO:0000255" key="1">
    <source>
        <dbReference type="PROSITE-ProRule" id="PRU00541"/>
    </source>
</evidence>
<evidence type="ECO:0000255" key="2">
    <source>
        <dbReference type="PROSITE-ProRule" id="PRU00542"/>
    </source>
</evidence>
<evidence type="ECO:0000256" key="3">
    <source>
        <dbReference type="SAM" id="MobiDB-lite"/>
    </source>
</evidence>
<evidence type="ECO:0000305" key="4"/>
<name>RH31_ORYSJ</name>
<gene>
    <name type="ordered locus">Os06g0526600</name>
    <name type="ordered locus">LOC_Os06g33520</name>
    <name type="ORF">OSJNBa0043B22.23</name>
    <name type="ORF">P0001B01.3</name>
</gene>
<protein>
    <recommendedName>
        <fullName>DEAD-box ATP-dependent RNA helicase 31</fullName>
        <ecNumber>3.6.4.13</ecNumber>
    </recommendedName>
</protein>
<comment type="catalytic activity">
    <reaction>
        <text>ATP + H2O = ADP + phosphate + H(+)</text>
        <dbReference type="Rhea" id="RHEA:13065"/>
        <dbReference type="ChEBI" id="CHEBI:15377"/>
        <dbReference type="ChEBI" id="CHEBI:15378"/>
        <dbReference type="ChEBI" id="CHEBI:30616"/>
        <dbReference type="ChEBI" id="CHEBI:43474"/>
        <dbReference type="ChEBI" id="CHEBI:456216"/>
        <dbReference type="EC" id="3.6.4.13"/>
    </reaction>
</comment>
<comment type="domain">
    <text>The Q motif is unique to and characteristic of the DEAD box family of RNA helicases and controls ATP binding and hydrolysis.</text>
</comment>
<comment type="similarity">
    <text evidence="4">Belongs to the DEAD box helicase family.</text>
</comment>
<comment type="sequence caution" evidence="4">
    <conflict type="erroneous gene model prediction">
        <sequence resource="EMBL-CDS" id="BAD46119"/>
    </conflict>
</comment>
<comment type="sequence caution" evidence="4">
    <conflict type="erroneous gene model prediction">
        <sequence resource="EMBL-CDS" id="BAD54190"/>
    </conflict>
</comment>
<comment type="sequence caution" evidence="4">
    <conflict type="erroneous gene model prediction">
        <sequence resource="EMBL-CDS" id="BAF19678"/>
    </conflict>
</comment>
<organism>
    <name type="scientific">Oryza sativa subsp. japonica</name>
    <name type="common">Rice</name>
    <dbReference type="NCBI Taxonomy" id="39947"/>
    <lineage>
        <taxon>Eukaryota</taxon>
        <taxon>Viridiplantae</taxon>
        <taxon>Streptophyta</taxon>
        <taxon>Embryophyta</taxon>
        <taxon>Tracheophyta</taxon>
        <taxon>Spermatophyta</taxon>
        <taxon>Magnoliopsida</taxon>
        <taxon>Liliopsida</taxon>
        <taxon>Poales</taxon>
        <taxon>Poaceae</taxon>
        <taxon>BOP clade</taxon>
        <taxon>Oryzoideae</taxon>
        <taxon>Oryzeae</taxon>
        <taxon>Oryzinae</taxon>
        <taxon>Oryza</taxon>
        <taxon>Oryza sativa</taxon>
    </lineage>
</organism>
<reference key="1">
    <citation type="journal article" date="2005" name="Nature">
        <title>The map-based sequence of the rice genome.</title>
        <authorList>
            <consortium name="International rice genome sequencing project (IRGSP)"/>
        </authorList>
    </citation>
    <scope>NUCLEOTIDE SEQUENCE [LARGE SCALE GENOMIC DNA]</scope>
    <source>
        <strain>cv. Nipponbare</strain>
    </source>
</reference>
<reference key="2">
    <citation type="journal article" date="2008" name="Nucleic Acids Res.">
        <title>The rice annotation project database (RAP-DB): 2008 update.</title>
        <authorList>
            <consortium name="The rice annotation project (RAP)"/>
        </authorList>
    </citation>
    <scope>GENOME REANNOTATION</scope>
    <source>
        <strain>cv. Nipponbare</strain>
    </source>
</reference>
<reference key="3">
    <citation type="journal article" date="2013" name="Rice">
        <title>Improvement of the Oryza sativa Nipponbare reference genome using next generation sequence and optical map data.</title>
        <authorList>
            <person name="Kawahara Y."/>
            <person name="de la Bastide M."/>
            <person name="Hamilton J.P."/>
            <person name="Kanamori H."/>
            <person name="McCombie W.R."/>
            <person name="Ouyang S."/>
            <person name="Schwartz D.C."/>
            <person name="Tanaka T."/>
            <person name="Wu J."/>
            <person name="Zhou S."/>
            <person name="Childs K.L."/>
            <person name="Davidson R.M."/>
            <person name="Lin H."/>
            <person name="Quesada-Ocampo L."/>
            <person name="Vaillancourt B."/>
            <person name="Sakai H."/>
            <person name="Lee S.S."/>
            <person name="Kim J."/>
            <person name="Numa H."/>
            <person name="Itoh T."/>
            <person name="Buell C.R."/>
            <person name="Matsumoto T."/>
        </authorList>
    </citation>
    <scope>GENOME REANNOTATION</scope>
    <source>
        <strain>cv. Nipponbare</strain>
    </source>
</reference>
<reference key="4">
    <citation type="journal article" date="2005" name="PLoS Biol.">
        <title>The genomes of Oryza sativa: a history of duplications.</title>
        <authorList>
            <person name="Yu J."/>
            <person name="Wang J."/>
            <person name="Lin W."/>
            <person name="Li S."/>
            <person name="Li H."/>
            <person name="Zhou J."/>
            <person name="Ni P."/>
            <person name="Dong W."/>
            <person name="Hu S."/>
            <person name="Zeng C."/>
            <person name="Zhang J."/>
            <person name="Zhang Y."/>
            <person name="Li R."/>
            <person name="Xu Z."/>
            <person name="Li S."/>
            <person name="Li X."/>
            <person name="Zheng H."/>
            <person name="Cong L."/>
            <person name="Lin L."/>
            <person name="Yin J."/>
            <person name="Geng J."/>
            <person name="Li G."/>
            <person name="Shi J."/>
            <person name="Liu J."/>
            <person name="Lv H."/>
            <person name="Li J."/>
            <person name="Wang J."/>
            <person name="Deng Y."/>
            <person name="Ran L."/>
            <person name="Shi X."/>
            <person name="Wang X."/>
            <person name="Wu Q."/>
            <person name="Li C."/>
            <person name="Ren X."/>
            <person name="Wang J."/>
            <person name="Wang X."/>
            <person name="Li D."/>
            <person name="Liu D."/>
            <person name="Zhang X."/>
            <person name="Ji Z."/>
            <person name="Zhao W."/>
            <person name="Sun Y."/>
            <person name="Zhang Z."/>
            <person name="Bao J."/>
            <person name="Han Y."/>
            <person name="Dong L."/>
            <person name="Ji J."/>
            <person name="Chen P."/>
            <person name="Wu S."/>
            <person name="Liu J."/>
            <person name="Xiao Y."/>
            <person name="Bu D."/>
            <person name="Tan J."/>
            <person name="Yang L."/>
            <person name="Ye C."/>
            <person name="Zhang J."/>
            <person name="Xu J."/>
            <person name="Zhou Y."/>
            <person name="Yu Y."/>
            <person name="Zhang B."/>
            <person name="Zhuang S."/>
            <person name="Wei H."/>
            <person name="Liu B."/>
            <person name="Lei M."/>
            <person name="Yu H."/>
            <person name="Li Y."/>
            <person name="Xu H."/>
            <person name="Wei S."/>
            <person name="He X."/>
            <person name="Fang L."/>
            <person name="Zhang Z."/>
            <person name="Zhang Y."/>
            <person name="Huang X."/>
            <person name="Su Z."/>
            <person name="Tong W."/>
            <person name="Li J."/>
            <person name="Tong Z."/>
            <person name="Li S."/>
            <person name="Ye J."/>
            <person name="Wang L."/>
            <person name="Fang L."/>
            <person name="Lei T."/>
            <person name="Chen C.-S."/>
            <person name="Chen H.-C."/>
            <person name="Xu Z."/>
            <person name="Li H."/>
            <person name="Huang H."/>
            <person name="Zhang F."/>
            <person name="Xu H."/>
            <person name="Li N."/>
            <person name="Zhao C."/>
            <person name="Li S."/>
            <person name="Dong L."/>
            <person name="Huang Y."/>
            <person name="Li L."/>
            <person name="Xi Y."/>
            <person name="Qi Q."/>
            <person name="Li W."/>
            <person name="Zhang B."/>
            <person name="Hu W."/>
            <person name="Zhang Y."/>
            <person name="Tian X."/>
            <person name="Jiao Y."/>
            <person name="Liang X."/>
            <person name="Jin J."/>
            <person name="Gao L."/>
            <person name="Zheng W."/>
            <person name="Hao B."/>
            <person name="Liu S.-M."/>
            <person name="Wang W."/>
            <person name="Yuan L."/>
            <person name="Cao M."/>
            <person name="McDermott J."/>
            <person name="Samudrala R."/>
            <person name="Wang J."/>
            <person name="Wong G.K.-S."/>
            <person name="Yang H."/>
        </authorList>
    </citation>
    <scope>NUCLEOTIDE SEQUENCE [LARGE SCALE GENOMIC DNA]</scope>
    <source>
        <strain>cv. Nipponbare</strain>
    </source>
</reference>